<accession>P14381</accession>
<reference key="1">
    <citation type="journal article" date="1989" name="Mol. Cell. Biol.">
        <title>Composite transposable elements in the Xenopus laevis genome.</title>
        <authorList>
            <person name="Garrett J.E."/>
            <person name="Knutzon D.S."/>
            <person name="Carroll D."/>
        </authorList>
    </citation>
    <scope>NUCLEOTIDE SEQUENCE [GENOMIC DNA]</scope>
</reference>
<dbReference type="EMBL" id="M26915">
    <property type="protein sequence ID" value="AAA49976.1"/>
    <property type="molecule type" value="Genomic_DNA"/>
</dbReference>
<dbReference type="PIR" id="B32494">
    <property type="entry name" value="B32494"/>
</dbReference>
<dbReference type="SMR" id="P14381"/>
<dbReference type="Proteomes" id="UP000186698">
    <property type="component" value="Unplaced"/>
</dbReference>
<dbReference type="GO" id="GO:0003824">
    <property type="term" value="F:catalytic activity"/>
    <property type="evidence" value="ECO:0007669"/>
    <property type="project" value="InterPro"/>
</dbReference>
<dbReference type="CDD" id="cd09076">
    <property type="entry name" value="L1-EN"/>
    <property type="match status" value="1"/>
</dbReference>
<dbReference type="CDD" id="cd01650">
    <property type="entry name" value="RT_nLTR_like"/>
    <property type="match status" value="1"/>
</dbReference>
<dbReference type="Gene3D" id="3.60.10.10">
    <property type="entry name" value="Endonuclease/exonuclease/phosphatase"/>
    <property type="match status" value="1"/>
</dbReference>
<dbReference type="InterPro" id="IPR043502">
    <property type="entry name" value="DNA/RNA_pol_sf"/>
</dbReference>
<dbReference type="InterPro" id="IPR036691">
    <property type="entry name" value="Endo/exonu/phosph_ase_sf"/>
</dbReference>
<dbReference type="InterPro" id="IPR005135">
    <property type="entry name" value="Endo/exonuclease/phosphatase"/>
</dbReference>
<dbReference type="InterPro" id="IPR000477">
    <property type="entry name" value="RT_dom"/>
</dbReference>
<dbReference type="PANTHER" id="PTHR19446">
    <property type="entry name" value="REVERSE TRANSCRIPTASES"/>
    <property type="match status" value="1"/>
</dbReference>
<dbReference type="Pfam" id="PF03372">
    <property type="entry name" value="Exo_endo_phos"/>
    <property type="match status" value="1"/>
</dbReference>
<dbReference type="Pfam" id="PF00078">
    <property type="entry name" value="RVT_1"/>
    <property type="match status" value="1"/>
</dbReference>
<dbReference type="SUPFAM" id="SSF56672">
    <property type="entry name" value="DNA/RNA polymerases"/>
    <property type="match status" value="1"/>
</dbReference>
<dbReference type="SUPFAM" id="SSF56219">
    <property type="entry name" value="DNase I-like"/>
    <property type="match status" value="1"/>
</dbReference>
<dbReference type="PROSITE" id="PS50878">
    <property type="entry name" value="RT_POL"/>
    <property type="match status" value="1"/>
</dbReference>
<proteinExistence type="predicted"/>
<feature type="chain" id="PRO_0000066537" description="Transposon TX1 uncharacterized 149 kDa protein">
    <location>
        <begin position="1"/>
        <end position="1308"/>
    </location>
</feature>
<feature type="domain" description="Reverse transcriptase" evidence="1">
    <location>
        <begin position="494"/>
        <end position="765"/>
    </location>
</feature>
<evidence type="ECO:0000255" key="1">
    <source>
        <dbReference type="PROSITE-ProRule" id="PRU00405"/>
    </source>
</evidence>
<keyword id="KW-1185">Reference proteome</keyword>
<keyword id="KW-0814">Transposable element</keyword>
<organism>
    <name type="scientific">Xenopus laevis</name>
    <name type="common">African clawed frog</name>
    <dbReference type="NCBI Taxonomy" id="8355"/>
    <lineage>
        <taxon>Eukaryota</taxon>
        <taxon>Metazoa</taxon>
        <taxon>Chordata</taxon>
        <taxon>Craniata</taxon>
        <taxon>Vertebrata</taxon>
        <taxon>Euteleostomi</taxon>
        <taxon>Amphibia</taxon>
        <taxon>Batrachia</taxon>
        <taxon>Anura</taxon>
        <taxon>Pipoidea</taxon>
        <taxon>Pipidae</taxon>
        <taxon>Xenopodinae</taxon>
        <taxon>Xenopus</taxon>
        <taxon>Xenopus</taxon>
    </lineage>
</organism>
<protein>
    <recommendedName>
        <fullName>Transposon TX1 uncharacterized 149 kDa protein</fullName>
    </recommendedName>
    <alternativeName>
        <fullName>ORF 2</fullName>
    </alternativeName>
</protein>
<sequence length="1308" mass="149578">MALSISTLNTNGCRNPFRMFQVLSFLRQGGYSVSFLQETHTTPELEASWNLEWKGRVFFNHLTWTSCGVVTLFSDSFQPEVLSATSVIPGRLLHLRVRESGRTYNLMNVYAPTTGPERARFFESLSAYMETIDSDEALIIGGDFNYTLDARDRNVPKKRDSSESVLRELIAHFSLVDVWREQNPETVAFTYVRVRDGHVSQSRIDRIYISSHLMSRAQSSTIRLAPFSDHNCVSLRMSIAPSLPKAAYWHFNNSLLEDEGFAKSVRDTWRGWRAFQDEFATLNQWWDVGKVHLKLLCQEYTKSVSGQRNAEIEALNGEVLDLEQRLSGSEDQALQCEYLERKEALRNMEQRQARGAFVRSRMQLLCDMDRGSRFFYALEKKKGNRKQITCLFAEDGTPLEDPEAIRDRARSFYQNLFSPDPISPDACEELWDGLPVVSERRKERLETPITLDELSQALRLMPHNKSPGLDGLTIEFFQFFWDTLGPDFHRVLTEAFKKGELPLSCRRAVLSLLPKKGDLRLIKNWRPVSLLSTDYKIVAKAISLRLKSVLAEVIHPDQSYTVPGRTIFDNVFLIRDLLHFARRTGLSLAFLSLDQEKAFDRVDHQYLIGTLQAYSFGPQFVGYLKTMYASAECLVKINWSLTAPLAFGRGVRQGCPLSGQLYSLAIEPFLCLLRKRLTGLVLKEPDMRVVLSAYADDVILVAQDLVDLERAQECQEVYAAASSARINWSKSSGLLEGSLKVDFLPPAFRDISWESKIIKYLGVYLSAEEYPVSQNFIELEECVLTRLGKWKGFAKVLSMRGRALVINQLVASQIWYRLICLSPTQEFIAKIQRRLLDFLWIGKHWVSAGVSSLPLKEGGQGVVCIRSQVHTFRLQQIQRYLYADPSPQWCTLASSFYRQVRNMGYDRQLFIIEPEGFLRNLSTLPAYYQDTLKTWSMVSVLRQGATEGEDILNEPLLYNPSFKTRMLESISIRRRLCQAQLTRVGDLLDFEKSDWVDSQAVMQRMGFLTTRVPHRLLKEIKDTISPDSHTFIDGVLHAGEPRPPWNSSPPDIIIAPKTRQSPQAPPSPNLSQLENFPLTRFHDITRKLLYSLMLHTVHFLALISRYDTIWRRVLNEGERPQWRAFYSSLVPRPTGDLSWKVLHGALSTGEYLARFTDSPAACPFCGKGESVFHAYFTCARLQPLLALLRKLYLQFWLHFSPHVYIFGRPVSRDNKEKDLLSNLLLALAKLVIHKSRKQCLEGGNPLPAEVLFRVLVRSRIRAEYTQAVFTGRLKEFADQWAIDGVLCSVSPDLVSVQTILTLPYLSAL</sequence>
<name>YTX2_XENLA</name>